<protein>
    <recommendedName>
        <fullName>Probable conjugal transfer protein TraF</fullName>
    </recommendedName>
</protein>
<accession>P55417</accession>
<feature type="signal peptide" evidence="1">
    <location>
        <begin position="1"/>
        <end position="28"/>
    </location>
</feature>
<feature type="chain" id="PRO_0000022580" description="Probable conjugal transfer protein TraF">
    <location>
        <begin position="29"/>
        <end position="188"/>
    </location>
</feature>
<proteinExistence type="inferred from homology"/>
<gene>
    <name type="primary">traF</name>
    <name type="ordered locus">NGR_a03990</name>
    <name type="ORF">y4dR</name>
</gene>
<geneLocation type="plasmid">
    <name>sym pNGR234a</name>
</geneLocation>
<comment type="function">
    <text evidence="2">Involved in conjugal transfer of the plasmid.</text>
</comment>
<comment type="subcellular location">
    <subcellularLocation>
        <location evidence="2">Periplasm</location>
    </subcellularLocation>
</comment>
<comment type="similarity">
    <text evidence="2">Belongs to the peptidase S26C family.</text>
</comment>
<organism>
    <name type="scientific">Sinorhizobium fredii (strain NBRC 101917 / NGR234)</name>
    <dbReference type="NCBI Taxonomy" id="394"/>
    <lineage>
        <taxon>Bacteria</taxon>
        <taxon>Pseudomonadati</taxon>
        <taxon>Pseudomonadota</taxon>
        <taxon>Alphaproteobacteria</taxon>
        <taxon>Hyphomicrobiales</taxon>
        <taxon>Rhizobiaceae</taxon>
        <taxon>Sinorhizobium/Ensifer group</taxon>
        <taxon>Sinorhizobium</taxon>
    </lineage>
</organism>
<sequence>MNIPLVELTSRRRRGKPLLLGLATMTMAAVGTISAAWFGGYRINLTPSEPLGLWRIVKIDRPSAVGDLVFICPPRTSAMREARMRGYLRAGLCPGGIAPLIKSVIAVAGQRVEVGVSVNVDGHPVPSSALALRDGQGRPMKPFSGGIVPTDYVFLHSPFSGSYDSRYFGPIPAAGILGLAQEVLTYAP</sequence>
<dbReference type="EMBL" id="U00090">
    <property type="protein sequence ID" value="AAB91647.1"/>
    <property type="molecule type" value="Genomic_DNA"/>
</dbReference>
<dbReference type="RefSeq" id="NP_443827.1">
    <property type="nucleotide sequence ID" value="NC_000914.2"/>
</dbReference>
<dbReference type="SMR" id="P55417"/>
<dbReference type="MEROPS" id="S26.014"/>
<dbReference type="KEGG" id="rhi:NGR_a03990"/>
<dbReference type="PATRIC" id="fig|394.7.peg.420"/>
<dbReference type="eggNOG" id="COG4959">
    <property type="taxonomic scope" value="Bacteria"/>
</dbReference>
<dbReference type="HOGENOM" id="CLU_104604_3_0_5"/>
<dbReference type="OrthoDB" id="5360818at2"/>
<dbReference type="Proteomes" id="UP000001054">
    <property type="component" value="Plasmid pNGR234a"/>
</dbReference>
<dbReference type="GO" id="GO:0042597">
    <property type="term" value="C:periplasmic space"/>
    <property type="evidence" value="ECO:0007669"/>
    <property type="project" value="UniProtKB-SubCell"/>
</dbReference>
<dbReference type="GO" id="GO:0004252">
    <property type="term" value="F:serine-type endopeptidase activity"/>
    <property type="evidence" value="ECO:0007669"/>
    <property type="project" value="InterPro"/>
</dbReference>
<dbReference type="GO" id="GO:0006465">
    <property type="term" value="P:signal peptide processing"/>
    <property type="evidence" value="ECO:0007669"/>
    <property type="project" value="InterPro"/>
</dbReference>
<dbReference type="Gene3D" id="2.10.109.10">
    <property type="entry name" value="Umud Fragment, subunit A"/>
    <property type="match status" value="1"/>
</dbReference>
<dbReference type="InterPro" id="IPR036286">
    <property type="entry name" value="LexA/Signal_pep-like_sf"/>
</dbReference>
<dbReference type="InterPro" id="IPR019533">
    <property type="entry name" value="Peptidase_S26"/>
</dbReference>
<dbReference type="InterPro" id="IPR014139">
    <property type="entry name" value="Peptidase_S26C_TraF"/>
</dbReference>
<dbReference type="NCBIfam" id="NF010412">
    <property type="entry name" value="PRK13838.1"/>
    <property type="match status" value="1"/>
</dbReference>
<dbReference type="NCBIfam" id="TIGR02771">
    <property type="entry name" value="TraF_Ti"/>
    <property type="match status" value="1"/>
</dbReference>
<dbReference type="Pfam" id="PF10502">
    <property type="entry name" value="Peptidase_S26"/>
    <property type="match status" value="1"/>
</dbReference>
<dbReference type="SUPFAM" id="SSF51306">
    <property type="entry name" value="LexA/Signal peptidase"/>
    <property type="match status" value="1"/>
</dbReference>
<keyword id="KW-0184">Conjugation</keyword>
<keyword id="KW-0574">Periplasm</keyword>
<keyword id="KW-0614">Plasmid</keyword>
<keyword id="KW-1185">Reference proteome</keyword>
<keyword id="KW-0732">Signal</keyword>
<reference key="1">
    <citation type="journal article" date="1997" name="Nature">
        <title>Molecular basis of symbiosis between Rhizobium and legumes.</title>
        <authorList>
            <person name="Freiberg C.A."/>
            <person name="Fellay R."/>
            <person name="Bairoch A."/>
            <person name="Broughton W.J."/>
            <person name="Rosenthal A."/>
            <person name="Perret X."/>
        </authorList>
    </citation>
    <scope>NUCLEOTIDE SEQUENCE [LARGE SCALE GENOMIC DNA]</scope>
    <source>
        <strain>NBRC 101917 / NGR234</strain>
    </source>
</reference>
<reference key="2">
    <citation type="journal article" date="2009" name="Appl. Environ. Microbiol.">
        <title>Rhizobium sp. strain NGR234 possesses a remarkable number of secretion systems.</title>
        <authorList>
            <person name="Schmeisser C."/>
            <person name="Liesegang H."/>
            <person name="Krysciak D."/>
            <person name="Bakkou N."/>
            <person name="Le Quere A."/>
            <person name="Wollherr A."/>
            <person name="Heinemeyer I."/>
            <person name="Morgenstern B."/>
            <person name="Pommerening-Roeser A."/>
            <person name="Flores M."/>
            <person name="Palacios R."/>
            <person name="Brenner S."/>
            <person name="Gottschalk G."/>
            <person name="Schmitz R.A."/>
            <person name="Broughton W.J."/>
            <person name="Perret X."/>
            <person name="Strittmatter A.W."/>
            <person name="Streit W.R."/>
        </authorList>
    </citation>
    <scope>NUCLEOTIDE SEQUENCE [LARGE SCALE GENOMIC DNA]</scope>
    <source>
        <strain>NBRC 101917 / NGR234</strain>
    </source>
</reference>
<name>TRAF_SINFN</name>
<evidence type="ECO:0000255" key="1"/>
<evidence type="ECO:0000305" key="2"/>